<protein>
    <recommendedName>
        <fullName evidence="2">4-diphosphocytidyl-2-C-methyl-D-erythritol kinase</fullName>
        <shortName evidence="2">CMK</shortName>
        <ecNumber evidence="2">2.7.1.148</ecNumber>
    </recommendedName>
    <alternativeName>
        <fullName evidence="2">4-(cytidine-5'-diphospho)-2-C-methyl-D-erythritol kinase</fullName>
    </alternativeName>
</protein>
<comment type="function">
    <text evidence="2">Catalyzes the phosphorylation of the position 2 hydroxy group of 4-diphosphocytidyl-2C-methyl-D-erythritol.</text>
</comment>
<comment type="catalytic activity">
    <reaction evidence="2">
        <text>4-CDP-2-C-methyl-D-erythritol + ATP = 4-CDP-2-C-methyl-D-erythritol 2-phosphate + ADP + H(+)</text>
        <dbReference type="Rhea" id="RHEA:18437"/>
        <dbReference type="ChEBI" id="CHEBI:15378"/>
        <dbReference type="ChEBI" id="CHEBI:30616"/>
        <dbReference type="ChEBI" id="CHEBI:57823"/>
        <dbReference type="ChEBI" id="CHEBI:57919"/>
        <dbReference type="ChEBI" id="CHEBI:456216"/>
        <dbReference type="EC" id="2.7.1.148"/>
    </reaction>
</comment>
<comment type="pathway">
    <text evidence="2">Isoprenoid biosynthesis; isopentenyl diphosphate biosynthesis via DXP pathway; isopentenyl diphosphate from 1-deoxy-D-xylulose 5-phosphate: step 3/6.</text>
</comment>
<comment type="similarity">
    <text evidence="2">Belongs to the GHMP kinase family. IspE subfamily.</text>
</comment>
<comment type="sequence caution" evidence="1">
    <conflict type="erroneous initiation">
        <sequence resource="EMBL-CDS" id="ACC42883"/>
    </conflict>
    <text>Truncated N-terminus.</text>
</comment>
<keyword id="KW-0067">ATP-binding</keyword>
<keyword id="KW-0414">Isoprene biosynthesis</keyword>
<keyword id="KW-0418">Kinase</keyword>
<keyword id="KW-0547">Nucleotide-binding</keyword>
<keyword id="KW-1185">Reference proteome</keyword>
<keyword id="KW-0808">Transferase</keyword>
<dbReference type="EC" id="2.7.1.148" evidence="2"/>
<dbReference type="EMBL" id="CP000854">
    <property type="protein sequence ID" value="ACC42883.1"/>
    <property type="status" value="ALT_INIT"/>
    <property type="molecule type" value="Genomic_DNA"/>
</dbReference>
<dbReference type="RefSeq" id="WP_181013077.1">
    <property type="nucleotide sequence ID" value="NC_010612.1"/>
</dbReference>
<dbReference type="SMR" id="B2HDJ9"/>
<dbReference type="STRING" id="216594.MMAR_4477"/>
<dbReference type="KEGG" id="mmi:MMAR_4477"/>
<dbReference type="eggNOG" id="COG1947">
    <property type="taxonomic scope" value="Bacteria"/>
</dbReference>
<dbReference type="HOGENOM" id="CLU_053057_1_1_11"/>
<dbReference type="UniPathway" id="UPA00056">
    <property type="reaction ID" value="UER00094"/>
</dbReference>
<dbReference type="Proteomes" id="UP000001190">
    <property type="component" value="Chromosome"/>
</dbReference>
<dbReference type="GO" id="GO:0050515">
    <property type="term" value="F:4-(cytidine 5'-diphospho)-2-C-methyl-D-erythritol kinase activity"/>
    <property type="evidence" value="ECO:0007669"/>
    <property type="project" value="UniProtKB-UniRule"/>
</dbReference>
<dbReference type="GO" id="GO:0005524">
    <property type="term" value="F:ATP binding"/>
    <property type="evidence" value="ECO:0007669"/>
    <property type="project" value="UniProtKB-UniRule"/>
</dbReference>
<dbReference type="GO" id="GO:0019288">
    <property type="term" value="P:isopentenyl diphosphate biosynthetic process, methylerythritol 4-phosphate pathway"/>
    <property type="evidence" value="ECO:0007669"/>
    <property type="project" value="UniProtKB-UniRule"/>
</dbReference>
<dbReference type="GO" id="GO:0016114">
    <property type="term" value="P:terpenoid biosynthetic process"/>
    <property type="evidence" value="ECO:0007669"/>
    <property type="project" value="InterPro"/>
</dbReference>
<dbReference type="FunFam" id="3.30.70.890:FF:000013">
    <property type="entry name" value="4-diphosphocytidyl-2-C-methyl-D-erythritol kinase"/>
    <property type="match status" value="1"/>
</dbReference>
<dbReference type="Gene3D" id="3.30.230.10">
    <property type="match status" value="1"/>
</dbReference>
<dbReference type="Gene3D" id="3.30.70.890">
    <property type="entry name" value="GHMP kinase, C-terminal domain"/>
    <property type="match status" value="1"/>
</dbReference>
<dbReference type="HAMAP" id="MF_00061">
    <property type="entry name" value="IspE"/>
    <property type="match status" value="1"/>
</dbReference>
<dbReference type="InterPro" id="IPR013750">
    <property type="entry name" value="GHMP_kinase_C_dom"/>
</dbReference>
<dbReference type="InterPro" id="IPR036554">
    <property type="entry name" value="GHMP_kinase_C_sf"/>
</dbReference>
<dbReference type="InterPro" id="IPR006204">
    <property type="entry name" value="GHMP_kinase_N_dom"/>
</dbReference>
<dbReference type="InterPro" id="IPR004424">
    <property type="entry name" value="IspE"/>
</dbReference>
<dbReference type="InterPro" id="IPR020568">
    <property type="entry name" value="Ribosomal_Su5_D2-typ_SF"/>
</dbReference>
<dbReference type="InterPro" id="IPR014721">
    <property type="entry name" value="Ribsml_uS5_D2-typ_fold_subgr"/>
</dbReference>
<dbReference type="NCBIfam" id="TIGR00154">
    <property type="entry name" value="ispE"/>
    <property type="match status" value="1"/>
</dbReference>
<dbReference type="NCBIfam" id="NF002870">
    <property type="entry name" value="PRK03188.1"/>
    <property type="match status" value="1"/>
</dbReference>
<dbReference type="PANTHER" id="PTHR43527">
    <property type="entry name" value="4-DIPHOSPHOCYTIDYL-2-C-METHYL-D-ERYTHRITOL KINASE, CHLOROPLASTIC"/>
    <property type="match status" value="1"/>
</dbReference>
<dbReference type="PANTHER" id="PTHR43527:SF2">
    <property type="entry name" value="4-DIPHOSPHOCYTIDYL-2-C-METHYL-D-ERYTHRITOL KINASE, CHLOROPLASTIC"/>
    <property type="match status" value="1"/>
</dbReference>
<dbReference type="Pfam" id="PF08544">
    <property type="entry name" value="GHMP_kinases_C"/>
    <property type="match status" value="1"/>
</dbReference>
<dbReference type="Pfam" id="PF00288">
    <property type="entry name" value="GHMP_kinases_N"/>
    <property type="match status" value="1"/>
</dbReference>
<dbReference type="PIRSF" id="PIRSF010376">
    <property type="entry name" value="IspE"/>
    <property type="match status" value="1"/>
</dbReference>
<dbReference type="SUPFAM" id="SSF55060">
    <property type="entry name" value="GHMP Kinase, C-terminal domain"/>
    <property type="match status" value="1"/>
</dbReference>
<dbReference type="SUPFAM" id="SSF54211">
    <property type="entry name" value="Ribosomal protein S5 domain 2-like"/>
    <property type="match status" value="1"/>
</dbReference>
<organism>
    <name type="scientific">Mycobacterium marinum (strain ATCC BAA-535 / M)</name>
    <dbReference type="NCBI Taxonomy" id="216594"/>
    <lineage>
        <taxon>Bacteria</taxon>
        <taxon>Bacillati</taxon>
        <taxon>Actinomycetota</taxon>
        <taxon>Actinomycetes</taxon>
        <taxon>Mycobacteriales</taxon>
        <taxon>Mycobacteriaceae</taxon>
        <taxon>Mycobacterium</taxon>
        <taxon>Mycobacterium ulcerans group</taxon>
    </lineage>
</organism>
<reference key="1">
    <citation type="journal article" date="2008" name="Genome Res.">
        <title>Insights from the complete genome sequence of Mycobacterium marinum on the evolution of Mycobacterium tuberculosis.</title>
        <authorList>
            <person name="Stinear T.P."/>
            <person name="Seemann T."/>
            <person name="Harrison P.F."/>
            <person name="Jenkin G.A."/>
            <person name="Davies J.K."/>
            <person name="Johnson P.D."/>
            <person name="Abdellah Z."/>
            <person name="Arrowsmith C."/>
            <person name="Chillingworth T."/>
            <person name="Churcher C."/>
            <person name="Clarke K."/>
            <person name="Cronin A."/>
            <person name="Davis P."/>
            <person name="Goodhead I."/>
            <person name="Holroyd N."/>
            <person name="Jagels K."/>
            <person name="Lord A."/>
            <person name="Moule S."/>
            <person name="Mungall K."/>
            <person name="Norbertczak H."/>
            <person name="Quail M.A."/>
            <person name="Rabbinowitsch E."/>
            <person name="Walker D."/>
            <person name="White B."/>
            <person name="Whitehead S."/>
            <person name="Small P.L."/>
            <person name="Brosch R."/>
            <person name="Ramakrishnan L."/>
            <person name="Fischbach M.A."/>
            <person name="Parkhill J."/>
            <person name="Cole S.T."/>
        </authorList>
    </citation>
    <scope>NUCLEOTIDE SEQUENCE [LARGE SCALE GENOMIC DNA]</scope>
    <source>
        <strain>ATCC BAA-535 / M</strain>
    </source>
</reference>
<proteinExistence type="inferred from homology"/>
<gene>
    <name evidence="2" type="primary">ispE</name>
    <name type="ordered locus">MMAR_4477</name>
</gene>
<evidence type="ECO:0000250" key="1">
    <source>
        <dbReference type="UniProtKB" id="P9WKG7"/>
    </source>
</evidence>
<evidence type="ECO:0000255" key="2">
    <source>
        <dbReference type="HAMAP-Rule" id="MF_00061"/>
    </source>
</evidence>
<accession>B2HDJ9</accession>
<name>ISPE_MYCMM</name>
<feature type="chain" id="PRO_1000092099" description="4-diphosphocytidyl-2-C-methyl-D-erythritol kinase">
    <location>
        <begin position="1"/>
        <end position="320"/>
    </location>
</feature>
<feature type="active site" evidence="2">
    <location>
        <position position="26"/>
    </location>
</feature>
<feature type="active site" evidence="2">
    <location>
        <position position="153"/>
    </location>
</feature>
<feature type="binding site" evidence="2">
    <location>
        <begin position="111"/>
        <end position="121"/>
    </location>
    <ligand>
        <name>ATP</name>
        <dbReference type="ChEBI" id="CHEBI:30616"/>
    </ligand>
</feature>
<sequence>MSRTSDGNTAELWVPTGSATVRVPGKVNLYLAVGDRRDDGYHELTTVFHAVSLVDEVTVRNADLLSLEVVGEGADRLPTDKRNLAWQAAELMAEHVGRAPDVSIFIDKSIPVAGGMAGGSADAAAVLVAMNSLWELNLPRRDLRMLAARLGSDVPFALHGGTALGTGRGEELATVLSRNTFHWVLAFARSGLSTPAVFTELDRLRDVGSPPRLAEPGPVLAALAAGDPEQLAPLLGNEMQAAAVSLDPALRRALRAGVEAGALAGIVSGSGPTCAFLCRTAESALDVSAQLSGAGVCRTVRIATGPVPGARVVPTPGIAE</sequence>